<comment type="function">
    <text evidence="1">Protein S19 forms a complex with S13 that binds strongly to the 16S ribosomal RNA.</text>
</comment>
<comment type="similarity">
    <text evidence="2">Belongs to the universal ribosomal protein uS19 family.</text>
</comment>
<gene>
    <name type="primary">rps19</name>
    <name type="ordered locus">PYRAB03380</name>
    <name type="ORF">PAB2123</name>
</gene>
<dbReference type="EMBL" id="AJ248284">
    <property type="protein sequence ID" value="CAB49260.1"/>
    <property type="molecule type" value="Genomic_DNA"/>
</dbReference>
<dbReference type="EMBL" id="HE613800">
    <property type="protein sequence ID" value="CCE69715.1"/>
    <property type="molecule type" value="Genomic_DNA"/>
</dbReference>
<dbReference type="PIR" id="E75147">
    <property type="entry name" value="E75147"/>
</dbReference>
<dbReference type="PDB" id="6SW9">
    <property type="method" value="EM"/>
    <property type="resolution" value="4.20 A"/>
    <property type="chains" value="T=1-132"/>
</dbReference>
<dbReference type="PDB" id="6SWC">
    <property type="method" value="EM"/>
    <property type="resolution" value="3.30 A"/>
    <property type="chains" value="T=1-132"/>
</dbReference>
<dbReference type="PDB" id="6SWE">
    <property type="method" value="EM"/>
    <property type="resolution" value="3.10 A"/>
    <property type="chains" value="T=1-132"/>
</dbReference>
<dbReference type="PDB" id="7ZAG">
    <property type="method" value="EM"/>
    <property type="resolution" value="2.77 A"/>
    <property type="chains" value="T=1-132"/>
</dbReference>
<dbReference type="PDB" id="7ZAH">
    <property type="method" value="EM"/>
    <property type="resolution" value="2.70 A"/>
    <property type="chains" value="T=1-132"/>
</dbReference>
<dbReference type="PDB" id="7ZAI">
    <property type="method" value="EM"/>
    <property type="resolution" value="2.60 A"/>
    <property type="chains" value="T=1-132"/>
</dbReference>
<dbReference type="PDB" id="7ZHG">
    <property type="method" value="EM"/>
    <property type="resolution" value="2.25 A"/>
    <property type="chains" value="T=1-132"/>
</dbReference>
<dbReference type="PDBsum" id="6SW9"/>
<dbReference type="PDBsum" id="6SWC"/>
<dbReference type="PDBsum" id="6SWE"/>
<dbReference type="PDBsum" id="7ZAG"/>
<dbReference type="PDBsum" id="7ZAH"/>
<dbReference type="PDBsum" id="7ZAI"/>
<dbReference type="PDBsum" id="7ZHG"/>
<dbReference type="EMDB" id="EMD-10320"/>
<dbReference type="EMDB" id="EMD-10322"/>
<dbReference type="EMDB" id="EMD-10324"/>
<dbReference type="EMDB" id="EMD-14579"/>
<dbReference type="EMDB" id="EMD-14580"/>
<dbReference type="EMDB" id="EMD-14581"/>
<dbReference type="EMDB" id="EMD-14731"/>
<dbReference type="EMDB" id="EMD-8148"/>
<dbReference type="SMR" id="Q9V1T9"/>
<dbReference type="STRING" id="272844.PAB2123"/>
<dbReference type="KEGG" id="pab:PAB2123"/>
<dbReference type="PATRIC" id="fig|272844.11.peg.359"/>
<dbReference type="eggNOG" id="arCOG04099">
    <property type="taxonomic scope" value="Archaea"/>
</dbReference>
<dbReference type="HOGENOM" id="CLU_097347_1_1_2"/>
<dbReference type="OrthoDB" id="30559at2157"/>
<dbReference type="PhylomeDB" id="Q9V1T9"/>
<dbReference type="Proteomes" id="UP000000810">
    <property type="component" value="Chromosome"/>
</dbReference>
<dbReference type="Proteomes" id="UP000009139">
    <property type="component" value="Chromosome"/>
</dbReference>
<dbReference type="GO" id="GO:0022627">
    <property type="term" value="C:cytosolic small ribosomal subunit"/>
    <property type="evidence" value="ECO:0007669"/>
    <property type="project" value="TreeGrafter"/>
</dbReference>
<dbReference type="GO" id="GO:0019843">
    <property type="term" value="F:rRNA binding"/>
    <property type="evidence" value="ECO:0007669"/>
    <property type="project" value="UniProtKB-UniRule"/>
</dbReference>
<dbReference type="GO" id="GO:0003735">
    <property type="term" value="F:structural constituent of ribosome"/>
    <property type="evidence" value="ECO:0007669"/>
    <property type="project" value="InterPro"/>
</dbReference>
<dbReference type="GO" id="GO:0000028">
    <property type="term" value="P:ribosomal small subunit assembly"/>
    <property type="evidence" value="ECO:0007669"/>
    <property type="project" value="TreeGrafter"/>
</dbReference>
<dbReference type="GO" id="GO:0006412">
    <property type="term" value="P:translation"/>
    <property type="evidence" value="ECO:0007669"/>
    <property type="project" value="UniProtKB-UniRule"/>
</dbReference>
<dbReference type="FunFam" id="3.30.860.10:FF:000002">
    <property type="entry name" value="40S ribosomal protein S15"/>
    <property type="match status" value="1"/>
</dbReference>
<dbReference type="Gene3D" id="3.30.860.10">
    <property type="entry name" value="30s Ribosomal Protein S19, Chain A"/>
    <property type="match status" value="1"/>
</dbReference>
<dbReference type="HAMAP" id="MF_00531">
    <property type="entry name" value="Ribosomal_uS19"/>
    <property type="match status" value="1"/>
</dbReference>
<dbReference type="InterPro" id="IPR002222">
    <property type="entry name" value="Ribosomal_uS19"/>
</dbReference>
<dbReference type="InterPro" id="IPR020934">
    <property type="entry name" value="Ribosomal_uS19_CS"/>
</dbReference>
<dbReference type="InterPro" id="IPR005713">
    <property type="entry name" value="Ribosomal_uS19_euk/arc"/>
</dbReference>
<dbReference type="InterPro" id="IPR023575">
    <property type="entry name" value="Ribosomal_uS19_SF"/>
</dbReference>
<dbReference type="NCBIfam" id="NF003121">
    <property type="entry name" value="PRK04038.1"/>
    <property type="match status" value="1"/>
</dbReference>
<dbReference type="NCBIfam" id="TIGR01025">
    <property type="entry name" value="uS19_arch"/>
    <property type="match status" value="1"/>
</dbReference>
<dbReference type="PANTHER" id="PTHR11880">
    <property type="entry name" value="RIBOSOMAL PROTEIN S19P FAMILY MEMBER"/>
    <property type="match status" value="1"/>
</dbReference>
<dbReference type="PANTHER" id="PTHR11880:SF2">
    <property type="entry name" value="SMALL RIBOSOMAL SUBUNIT PROTEIN US19"/>
    <property type="match status" value="1"/>
</dbReference>
<dbReference type="Pfam" id="PF00203">
    <property type="entry name" value="Ribosomal_S19"/>
    <property type="match status" value="1"/>
</dbReference>
<dbReference type="PIRSF" id="PIRSF002144">
    <property type="entry name" value="Ribosomal_S19"/>
    <property type="match status" value="1"/>
</dbReference>
<dbReference type="PRINTS" id="PR00975">
    <property type="entry name" value="RIBOSOMALS19"/>
</dbReference>
<dbReference type="SUPFAM" id="SSF54570">
    <property type="entry name" value="Ribosomal protein S19"/>
    <property type="match status" value="1"/>
</dbReference>
<dbReference type="PROSITE" id="PS00323">
    <property type="entry name" value="RIBOSOMAL_S19"/>
    <property type="match status" value="1"/>
</dbReference>
<accession>Q9V1T9</accession>
<accession>G8ZHX2</accession>
<organism>
    <name type="scientific">Pyrococcus abyssi (strain GE5 / Orsay)</name>
    <dbReference type="NCBI Taxonomy" id="272844"/>
    <lineage>
        <taxon>Archaea</taxon>
        <taxon>Methanobacteriati</taxon>
        <taxon>Methanobacteriota</taxon>
        <taxon>Thermococci</taxon>
        <taxon>Thermococcales</taxon>
        <taxon>Thermococcaceae</taxon>
        <taxon>Pyrococcus</taxon>
    </lineage>
</organism>
<name>RS19_PYRAB</name>
<feature type="chain" id="PRO_0000130009" description="Small ribosomal subunit protein uS19">
    <location>
        <begin position="1"/>
        <end position="132"/>
    </location>
</feature>
<feature type="strand" evidence="4">
    <location>
        <begin position="8"/>
        <end position="10"/>
    </location>
</feature>
<feature type="helix" evidence="4">
    <location>
        <begin position="13"/>
        <end position="17"/>
    </location>
</feature>
<feature type="helix" evidence="4">
    <location>
        <begin position="21"/>
        <end position="25"/>
    </location>
</feature>
<feature type="helix" evidence="4">
    <location>
        <begin position="30"/>
        <end position="37"/>
    </location>
</feature>
<feature type="helix" evidence="4">
    <location>
        <begin position="42"/>
        <end position="55"/>
    </location>
</feature>
<feature type="strand" evidence="4">
    <location>
        <begin position="63"/>
        <end position="65"/>
    </location>
</feature>
<feature type="helix" evidence="4">
    <location>
        <begin position="74"/>
        <end position="76"/>
    </location>
</feature>
<feature type="strand" evidence="4">
    <location>
        <begin position="80"/>
        <end position="84"/>
    </location>
</feature>
<feature type="strand" evidence="4">
    <location>
        <begin position="86"/>
        <end position="93"/>
    </location>
</feature>
<feature type="helix" evidence="4">
    <location>
        <begin position="96"/>
        <end position="98"/>
    </location>
</feature>
<feature type="helix" evidence="4">
    <location>
        <begin position="103"/>
        <end position="106"/>
    </location>
</feature>
<feature type="turn" evidence="4">
    <location>
        <begin position="124"/>
        <end position="126"/>
    </location>
</feature>
<feature type="turn" evidence="3">
    <location>
        <begin position="128"/>
        <end position="130"/>
    </location>
</feature>
<keyword id="KW-0002">3D-structure</keyword>
<keyword id="KW-0687">Ribonucleoprotein</keyword>
<keyword id="KW-0689">Ribosomal protein</keyword>
<keyword id="KW-0694">RNA-binding</keyword>
<keyword id="KW-0699">rRNA-binding</keyword>
<protein>
    <recommendedName>
        <fullName evidence="2">Small ribosomal subunit protein uS19</fullName>
    </recommendedName>
    <alternativeName>
        <fullName>30S ribosomal protein S19</fullName>
    </alternativeName>
</protein>
<proteinExistence type="evidence at protein level"/>
<reference key="1">
    <citation type="journal article" date="2003" name="Mol. Microbiol.">
        <title>An integrated analysis of the genome of the hyperthermophilic archaeon Pyrococcus abyssi.</title>
        <authorList>
            <person name="Cohen G.N."/>
            <person name="Barbe V."/>
            <person name="Flament D."/>
            <person name="Galperin M."/>
            <person name="Heilig R."/>
            <person name="Lecompte O."/>
            <person name="Poch O."/>
            <person name="Prieur D."/>
            <person name="Querellou J."/>
            <person name="Ripp R."/>
            <person name="Thierry J.-C."/>
            <person name="Van der Oost J."/>
            <person name="Weissenbach J."/>
            <person name="Zivanovic Y."/>
            <person name="Forterre P."/>
        </authorList>
    </citation>
    <scope>NUCLEOTIDE SEQUENCE [LARGE SCALE GENOMIC DNA]</scope>
    <source>
        <strain>GE5 / Orsay</strain>
    </source>
</reference>
<reference key="2">
    <citation type="journal article" date="2012" name="Curr. Microbiol.">
        <title>Re-annotation of two hyperthermophilic archaea Pyrococcus abyssi GE5 and Pyrococcus furiosus DSM 3638.</title>
        <authorList>
            <person name="Gao J."/>
            <person name="Wang J."/>
        </authorList>
    </citation>
    <scope>GENOME REANNOTATION</scope>
    <source>
        <strain>GE5 / Orsay</strain>
    </source>
</reference>
<sequence>MARKEFRYRGYTLEQLMNMSLEELAKLLPARQRRSLKRGLTPEQKKLLRKIRLAKKGKYNKPIRTHCRDMIVLPEMVGLTIYVHNGKEFVPVEIKPEMIGHYLGEFAPTRKRVQHGAPGIGATRSSMFVAVK</sequence>
<evidence type="ECO:0000250" key="1"/>
<evidence type="ECO:0000305" key="2"/>
<evidence type="ECO:0007829" key="3">
    <source>
        <dbReference type="PDB" id="6SWE"/>
    </source>
</evidence>
<evidence type="ECO:0007829" key="4">
    <source>
        <dbReference type="PDB" id="7ZHG"/>
    </source>
</evidence>